<protein>
    <recommendedName>
        <fullName evidence="1">Ribosomal RNA small subunit methyltransferase I</fullName>
        <ecNumber evidence="1">2.1.1.198</ecNumber>
    </recommendedName>
    <alternativeName>
        <fullName evidence="1">16S rRNA 2'-O-ribose C1402 methyltransferase</fullName>
    </alternativeName>
    <alternativeName>
        <fullName evidence="1">rRNA (cytidine-2'-O-)-methyltransferase RsmI</fullName>
    </alternativeName>
</protein>
<feature type="chain" id="PRO_0000211963" description="Ribosomal RNA small subunit methyltransferase I">
    <location>
        <begin position="1"/>
        <end position="273"/>
    </location>
</feature>
<proteinExistence type="inferred from homology"/>
<organism>
    <name type="scientific">Xylella fastidiosa (strain Temecula1 / ATCC 700964)</name>
    <dbReference type="NCBI Taxonomy" id="183190"/>
    <lineage>
        <taxon>Bacteria</taxon>
        <taxon>Pseudomonadati</taxon>
        <taxon>Pseudomonadota</taxon>
        <taxon>Gammaproteobacteria</taxon>
        <taxon>Lysobacterales</taxon>
        <taxon>Lysobacteraceae</taxon>
        <taxon>Xylella</taxon>
    </lineage>
</organism>
<keyword id="KW-0963">Cytoplasm</keyword>
<keyword id="KW-0489">Methyltransferase</keyword>
<keyword id="KW-1185">Reference proteome</keyword>
<keyword id="KW-0698">rRNA processing</keyword>
<keyword id="KW-0949">S-adenosyl-L-methionine</keyword>
<keyword id="KW-0808">Transferase</keyword>
<reference key="1">
    <citation type="journal article" date="2003" name="J. Bacteriol.">
        <title>Comparative analyses of the complete genome sequences of Pierce's disease and citrus variegated chlorosis strains of Xylella fastidiosa.</title>
        <authorList>
            <person name="Van Sluys M.A."/>
            <person name="de Oliveira M.C."/>
            <person name="Monteiro-Vitorello C.B."/>
            <person name="Miyaki C.Y."/>
            <person name="Furlan L.R."/>
            <person name="Camargo L.E.A."/>
            <person name="da Silva A.C.R."/>
            <person name="Moon D.H."/>
            <person name="Takita M.A."/>
            <person name="Lemos E.G.M."/>
            <person name="Machado M.A."/>
            <person name="Ferro M.I.T."/>
            <person name="da Silva F.R."/>
            <person name="Goldman M.H.S."/>
            <person name="Goldman G.H."/>
            <person name="Lemos M.V.F."/>
            <person name="El-Dorry H."/>
            <person name="Tsai S.M."/>
            <person name="Carrer H."/>
            <person name="Carraro D.M."/>
            <person name="de Oliveira R.C."/>
            <person name="Nunes L.R."/>
            <person name="Siqueira W.J."/>
            <person name="Coutinho L.L."/>
            <person name="Kimura E.T."/>
            <person name="Ferro E.S."/>
            <person name="Harakava R."/>
            <person name="Kuramae E.E."/>
            <person name="Marino C.L."/>
            <person name="Giglioti E."/>
            <person name="Abreu I.L."/>
            <person name="Alves L.M.C."/>
            <person name="do Amaral A.M."/>
            <person name="Baia G.S."/>
            <person name="Blanco S.R."/>
            <person name="Brito M.S."/>
            <person name="Cannavan F.S."/>
            <person name="Celestino A.V."/>
            <person name="da Cunha A.F."/>
            <person name="Fenille R.C."/>
            <person name="Ferro J.A."/>
            <person name="Formighieri E.F."/>
            <person name="Kishi L.T."/>
            <person name="Leoni S.G."/>
            <person name="Oliveira A.R."/>
            <person name="Rosa V.E. Jr."/>
            <person name="Sassaki F.T."/>
            <person name="Sena J.A.D."/>
            <person name="de Souza A.A."/>
            <person name="Truffi D."/>
            <person name="Tsukumo F."/>
            <person name="Yanai G.M."/>
            <person name="Zaros L.G."/>
            <person name="Civerolo E.L."/>
            <person name="Simpson A.J.G."/>
            <person name="Almeida N.F. Jr."/>
            <person name="Setubal J.C."/>
            <person name="Kitajima J.P."/>
        </authorList>
    </citation>
    <scope>NUCLEOTIDE SEQUENCE [LARGE SCALE GENOMIC DNA]</scope>
    <source>
        <strain>Temecula1 / ATCC 700964</strain>
    </source>
</reference>
<sequence length="273" mass="29362">MSTPGTLHIVATPIGNLGDLSPRAQHILRTVTMICAEDTRHTRQLLAHFGIERPLLALHAHNEDTLAERIITRLISGESLALVSDAGTPLISDPGFLLVRAARAAGIRVTPVPGPSALIAALSVSGLPSNRFTFEGFLPAKPTARRDRLTHLAHEPRTLIFYEASHRIAECLTDLATIFGSMRIAVVARELTKIFETVLDGTLATLQTQVANDENQRKGEFVIIVQGAADQDAAKITEGRRIYALLKEHLPPSSAAKLAAEITGAPRKALYGG</sequence>
<comment type="function">
    <text evidence="1">Catalyzes the 2'-O-methylation of the ribose of cytidine 1402 (C1402) in 16S rRNA.</text>
</comment>
<comment type="catalytic activity">
    <reaction evidence="1">
        <text>cytidine(1402) in 16S rRNA + S-adenosyl-L-methionine = 2'-O-methylcytidine(1402) in 16S rRNA + S-adenosyl-L-homocysteine + H(+)</text>
        <dbReference type="Rhea" id="RHEA:42924"/>
        <dbReference type="Rhea" id="RHEA-COMP:10285"/>
        <dbReference type="Rhea" id="RHEA-COMP:10286"/>
        <dbReference type="ChEBI" id="CHEBI:15378"/>
        <dbReference type="ChEBI" id="CHEBI:57856"/>
        <dbReference type="ChEBI" id="CHEBI:59789"/>
        <dbReference type="ChEBI" id="CHEBI:74495"/>
        <dbReference type="ChEBI" id="CHEBI:82748"/>
        <dbReference type="EC" id="2.1.1.198"/>
    </reaction>
</comment>
<comment type="subcellular location">
    <subcellularLocation>
        <location evidence="1">Cytoplasm</location>
    </subcellularLocation>
</comment>
<comment type="similarity">
    <text evidence="1">Belongs to the methyltransferase superfamily. RsmI family.</text>
</comment>
<accession>Q87B70</accession>
<dbReference type="EC" id="2.1.1.198" evidence="1"/>
<dbReference type="EMBL" id="AE009442">
    <property type="protein sequence ID" value="AAO29430.1"/>
    <property type="molecule type" value="Genomic_DNA"/>
</dbReference>
<dbReference type="RefSeq" id="WP_004088794.1">
    <property type="nucleotide sequence ID" value="NC_004556.1"/>
</dbReference>
<dbReference type="SMR" id="Q87B70"/>
<dbReference type="DNASU" id="1142930"/>
<dbReference type="GeneID" id="93905415"/>
<dbReference type="KEGG" id="xft:PD_1588"/>
<dbReference type="HOGENOM" id="CLU_044779_4_0_6"/>
<dbReference type="Proteomes" id="UP000002516">
    <property type="component" value="Chromosome"/>
</dbReference>
<dbReference type="GO" id="GO:0005737">
    <property type="term" value="C:cytoplasm"/>
    <property type="evidence" value="ECO:0007669"/>
    <property type="project" value="UniProtKB-SubCell"/>
</dbReference>
<dbReference type="GO" id="GO:0070677">
    <property type="term" value="F:rRNA (cytosine-2'-O-)-methyltransferase activity"/>
    <property type="evidence" value="ECO:0007669"/>
    <property type="project" value="UniProtKB-UniRule"/>
</dbReference>
<dbReference type="CDD" id="cd11648">
    <property type="entry name" value="RsmI"/>
    <property type="match status" value="1"/>
</dbReference>
<dbReference type="FunFam" id="3.30.950.10:FF:000002">
    <property type="entry name" value="Ribosomal RNA small subunit methyltransferase I"/>
    <property type="match status" value="1"/>
</dbReference>
<dbReference type="FunFam" id="3.40.1010.10:FF:000007">
    <property type="entry name" value="Ribosomal RNA small subunit methyltransferase I"/>
    <property type="match status" value="1"/>
</dbReference>
<dbReference type="Gene3D" id="3.40.1010.10">
    <property type="entry name" value="Cobalt-precorrin-4 Transmethylase, Domain 1"/>
    <property type="match status" value="1"/>
</dbReference>
<dbReference type="Gene3D" id="3.30.950.10">
    <property type="entry name" value="Methyltransferase, Cobalt-precorrin-4 Transmethylase, Domain 2"/>
    <property type="match status" value="1"/>
</dbReference>
<dbReference type="HAMAP" id="MF_01877">
    <property type="entry name" value="16SrRNA_methyltr_I"/>
    <property type="match status" value="1"/>
</dbReference>
<dbReference type="InterPro" id="IPR000878">
    <property type="entry name" value="4pyrrol_Mease"/>
</dbReference>
<dbReference type="InterPro" id="IPR035996">
    <property type="entry name" value="4pyrrol_Methylase_sf"/>
</dbReference>
<dbReference type="InterPro" id="IPR014777">
    <property type="entry name" value="4pyrrole_Mease_sub1"/>
</dbReference>
<dbReference type="InterPro" id="IPR014776">
    <property type="entry name" value="4pyrrole_Mease_sub2"/>
</dbReference>
<dbReference type="InterPro" id="IPR008189">
    <property type="entry name" value="rRNA_ssu_MeTfrase_I"/>
</dbReference>
<dbReference type="InterPro" id="IPR053910">
    <property type="entry name" value="RsmI_HTH"/>
</dbReference>
<dbReference type="InterPro" id="IPR018063">
    <property type="entry name" value="SAM_MeTrfase_RsmI_CS"/>
</dbReference>
<dbReference type="NCBIfam" id="TIGR00096">
    <property type="entry name" value="16S rRNA (cytidine(1402)-2'-O)-methyltransferase"/>
    <property type="match status" value="1"/>
</dbReference>
<dbReference type="PANTHER" id="PTHR46111">
    <property type="entry name" value="RIBOSOMAL RNA SMALL SUBUNIT METHYLTRANSFERASE I"/>
    <property type="match status" value="1"/>
</dbReference>
<dbReference type="PANTHER" id="PTHR46111:SF1">
    <property type="entry name" value="RIBOSOMAL RNA SMALL SUBUNIT METHYLTRANSFERASE I"/>
    <property type="match status" value="1"/>
</dbReference>
<dbReference type="Pfam" id="PF23016">
    <property type="entry name" value="RsmI_C"/>
    <property type="match status" value="1"/>
</dbReference>
<dbReference type="Pfam" id="PF00590">
    <property type="entry name" value="TP_methylase"/>
    <property type="match status" value="1"/>
</dbReference>
<dbReference type="PIRSF" id="PIRSF005917">
    <property type="entry name" value="MTase_YraL"/>
    <property type="match status" value="1"/>
</dbReference>
<dbReference type="SUPFAM" id="SSF53790">
    <property type="entry name" value="Tetrapyrrole methylase"/>
    <property type="match status" value="1"/>
</dbReference>
<dbReference type="PROSITE" id="PS01296">
    <property type="entry name" value="RSMI"/>
    <property type="match status" value="1"/>
</dbReference>
<gene>
    <name evidence="1" type="primary">rsmI</name>
    <name type="ordered locus">PD_1588</name>
</gene>
<evidence type="ECO:0000255" key="1">
    <source>
        <dbReference type="HAMAP-Rule" id="MF_01877"/>
    </source>
</evidence>
<name>RSMI_XYLFT</name>